<gene>
    <name type="primary">85</name>
</gene>
<accession>Q05302</accession>
<dbReference type="EMBL" id="Z18946">
    <property type="protein sequence ID" value="CAA79461.1"/>
    <property type="molecule type" value="Genomic_DNA"/>
</dbReference>
<dbReference type="PIR" id="S31030">
    <property type="entry name" value="S31030"/>
</dbReference>
<dbReference type="RefSeq" id="NP_039749.1">
    <property type="nucleotide sequence ID" value="NC_001335.1"/>
</dbReference>
<dbReference type="SMR" id="Q05302"/>
<dbReference type="GeneID" id="2942906"/>
<dbReference type="KEGG" id="vg:2942906"/>
<dbReference type="OrthoDB" id="22491at10239"/>
<dbReference type="Proteomes" id="UP000002123">
    <property type="component" value="Genome"/>
</dbReference>
<name>VG85_BPML5</name>
<sequence>MTEELVNHLFEAIVVENVKRANANMAEPYNHSVYKFHEDRIDRLVTTLADGNEALRDQFYEALFDITWDGVAWAKKVFAEISRDIAEG</sequence>
<protein>
    <recommendedName>
        <fullName>Gene 85 protein</fullName>
    </recommendedName>
    <alternativeName>
        <fullName>Gp85</fullName>
    </alternativeName>
</protein>
<reference key="1">
    <citation type="journal article" date="1993" name="Mol. Microbiol.">
        <title>DNA sequence, structure and gene expression of mycobacteriophage L5: a phage system for mycobacterial genetics.</title>
        <authorList>
            <person name="Hatfull G.F."/>
            <person name="Sarkis G.J."/>
        </authorList>
    </citation>
    <scope>NUCLEOTIDE SEQUENCE [LARGE SCALE GENOMIC DNA]</scope>
</reference>
<proteinExistence type="predicted"/>
<feature type="chain" id="PRO_0000164829" description="Gene 85 protein">
    <location>
        <begin position="1"/>
        <end position="88"/>
    </location>
</feature>
<organism>
    <name type="scientific">Mycobacterium phage L5</name>
    <name type="common">Mycobacteriophage L5</name>
    <dbReference type="NCBI Taxonomy" id="31757"/>
    <lineage>
        <taxon>Viruses</taxon>
        <taxon>Duplodnaviria</taxon>
        <taxon>Heunggongvirae</taxon>
        <taxon>Uroviricota</taxon>
        <taxon>Caudoviricetes</taxon>
        <taxon>Fromanvirus</taxon>
    </lineage>
</organism>
<keyword id="KW-1185">Reference proteome</keyword>
<organismHost>
    <name type="scientific">Mycobacterium</name>
    <dbReference type="NCBI Taxonomy" id="1763"/>
</organismHost>